<proteinExistence type="evidence at transcript level"/>
<comment type="function">
    <text evidence="1">Probable role in mitotic spindle regulation and coordination of mitotic processes. May have a preferential role in regulating neurogenesis (By similarity).</text>
</comment>
<comment type="subcellular location">
    <subcellularLocation>
        <location evidence="1">Cytoplasm</location>
    </subcellularLocation>
    <subcellularLocation>
        <location evidence="1">Cytoplasm</location>
        <location evidence="1">Cytoskeleton</location>
        <location evidence="1">Spindle</location>
    </subcellularLocation>
    <subcellularLocation>
        <location evidence="1">Nucleus</location>
    </subcellularLocation>
    <text evidence="1">The nuclear-cytoplasmic distribution could be regulated by the availability of calmodulin. Localizes to spindle poles during mitosis (By similarity).</text>
</comment>
<evidence type="ECO:0000250" key="1"/>
<evidence type="ECO:0000250" key="2">
    <source>
        <dbReference type="UniProtKB" id="Q8IZT6"/>
    </source>
</evidence>
<evidence type="ECO:0000255" key="3"/>
<evidence type="ECO:0000255" key="4">
    <source>
        <dbReference type="PROSITE-ProRule" id="PRU00044"/>
    </source>
</evidence>
<evidence type="ECO:0000255" key="5">
    <source>
        <dbReference type="PROSITE-ProRule" id="PRU00116"/>
    </source>
</evidence>
<evidence type="ECO:0000256" key="6">
    <source>
        <dbReference type="SAM" id="MobiDB-lite"/>
    </source>
</evidence>
<evidence type="ECO:0000269" key="7">
    <source>
    </source>
</evidence>
<evidence type="ECO:0000269" key="8">
    <source>
    </source>
</evidence>
<evidence type="ECO:0000305" key="9"/>
<accession>P62289</accession>
<name>ASPM_GORGO</name>
<gene>
    <name type="primary">ASPM</name>
</gene>
<sequence>MANRRVGRGCWEVSPTERRPPAGLRGPAAEEEASSPPVLSLSHFCRSPFLCFGDVLLGASRTLSLALDNPNEEVAEVKISHFPAADLGFSVSQRCFVLQPKEKIVISVNWTPLKEGRVREIMTFLVNDVLKHQAILLGNAEEQKKKKRSLWDTIKKKKISASTSHNRRVSNIQNVNKTFSVSQKVDRVRSPLQACENLAMNEGGPPTENNSLTLEENKIPISPISPAFNECHGATCLPLSVRRSTTYSSLHASENRELLNVHSANVSKVSFNEKAVTETSFNSVNVNGQSGENSKLSLTPNYSSTLNITQSQIHFLSPDSFVNNSHGANNELELVTCLSSDMFMKDNSKPVHLESTIAHEIYQKILSPDSFIKDNYGLNQDLESESVNPILSPNQFLKDNMAYVCTSQQTCKVPLSNENSQVPQSPEDWRKSEVSPRIPECQGSKSPKAIFEEIVEMKSNYYSFIKQNNPKFSAVQDISSHSHNKQPKRRPILSATVTKRKATCTRENQTEINKPKAKRCLNSAVGEHEKVINNQKEKDFHSYLPIIDPILSKSKSYKNEVAPSSTTASVARKRKSDGSMEDANVRVAVTEHTEVREIKRIHFSPSEPKTSAVKKTKNVITPISKHISNREKLNLKKKTDLSIFRTPISKTNKRTKPIIAVAQSNLTFIKPLKTDIPRHPMPFAAKNMFYDERWKEKQEQGFTWWLNFILTPDDFTVKTNISEVNAATLLLGIENQHKISVPRAPTKEEMSLRAYTARCRLNRLRRAACRLFTSEKMVKAIKKLEIEIEARRLIVRKDRHLWKDVGERQKVLNWLLSYNPLWLRIGLETTYGELISLEDNSDVTGLAMFILNRLLWNPDIAAEYRHPTVPHLYRDGHEEALSKFTLKKLLLLVCFLDYAKISRLIDHDPCLFCKDAEFKASKEILLAFSRDFLSGEGDLSRHLGLLGLPVNHVQTPFDEFDFAVTNLAVDLQCGVRLVRTMELLTQNWDLSKKLRIPAISRLQKMHNVDVVLQVLKSRGIELSDEHGNTILSKDIVDRHREKTLRLLWKIAFAFQVDISLNLDQLKEEIAFLKHTKSIKKTISLLSCHSDDLINKKKGKRDSGSFEQYSENIKLLMDWVNAVCAFYNKKVENFTVSFSDGRVLCYLIHHYHPCYVPFDAICQRTTQTVECTQTGSVVLNSSSESDDSSLDMSLKAFDHENTSELYKELLENEKKNFHLVRSAVRDLGGIPAMINHSDMSNTIPDEKVVITYLSFLCARLLDLRKEIRAARLIQTTWRKYKLKTDLKRHQEREKAARIIQLAVINFLAKQRLRKRVNAALVIQKYWRRVLAQRKLLMLKKEKLEKVQNKAASLIQGYWRRYSTRRRFLKLKYYSIILQSRIRMIIAVTSYKRYLWATVTIQRHWRAYLRRKQDQQRYEMLKSSTLVIQSMFRKWKQRKMQSQVKATVILQRAFREWHLRKHAKEENSAIIIQSWYRMHKELQKYIYIRSCVVIIQKRFRCFQAQKLYKRKKESILTIQKYYKAYLKGKIERTNYLQKRAAAIQLQAAFRRLKAHNLCRQIRAACVIQSYWRMRQDRVRFLNLKKTIIKLQAHVRKHQQRQKYKKMKKAAVIIQTHFRAYIFARKVLASYQKTRSAVIVLQSAYRGMQARKMYVHILTSVIKIQSYYRAHVSKKEFLSLKNATIKLQSIVKMKQTRKQYLHLRAAALFIQQCYRSKKIAAQKREEYMQMRESCIKLQAFVRGYLVRKQMRLQRKAVISLQSYFRMRKARQYYLKMYKAIIVIQNYYHAYKAQVNQRKNFLQVKKAATCLQAAYRGYKVRQLIKQQSIAALKIQSAFRGYNKRVKYQSVLQSIIKIQRWYRAYKTLHDTRTHFLKTKAALISLQSAYRGWKVRKQIRREHQAVLKIQSAFRMAKAQKQFRLFKTAALVIQQNFKAWTAGRKQRMEYIELRHAVLMLQSMWRGKTLRRQLQRQHKCAVIIQSYYRMHVQQKKWKIMKKAALLIQKYYRAYSIGREQNHLYLKTKAAVVTLQSAYRGMKVRKRIKDCNKAAVTIQSKYRAYKTKKKYATYRASAIIIQRWYRGIKITNHQHKEYLNLKKTAIKIQSVYRGIRVRRHIQHMHRAATFIKAVFKMHQSRISYHTMRKAAIVIQVRFRAYYQGKTQREKYLTILKAVKILQASFRGVRVRRTLRKMQIAATLIQSNYRRYRKQTYFNKLKKITKTVQQRYRAMKERNIQFQRYNKLRHSVIYIQAIFRGKKARRHLKMMHIAATLIQRRFRTLMMRRRFLSLKKTAILIQRKYRAHLCTKHHLQFLQVQNAVIKIQSSYRRWMIRKRMREMHRAATFIQATFRMHRLHMRYQTLKQASVVIQQQYQANRAAKLQRQHYLRQRHSAVILQAAFRGMKTRRHLKSMHSSATLIQSRFRSLLVRRRFISLKKATIFVQRKYRATICAKHKLHQFLHLRKAAITIQSSYRRLMVKKKLQEMQRAAILIQATFRMHRTYTTFQTWKHASILIQQHYRTYRAAKLQRENYIRQWHSAVVIQAAYKGMKARHLLREKHKASIIIQSTYRMYRQYCFYQKLQWATKIIQEKYRANKKKQKAFQHNELKKETCVQAGFQDMNIKKQIQEQHQAAIIIQKHCKAFKIRKHYLHLRATVVSIQRRYRKLTAVRTQAVICIQSYYRGFKVRKDIQNMHQAATLIQSFYRMHRAKVDYETKKTAIVVIQNYYRLYVRVKTERKNFLAVQKSVRTIQAAFRGMEVRQKLKNVSEEKVAAIVNQSALCCYRSKTQYEAVQSEGVMIQEWYKASGLACSQEAEYHSQSRAAVTIQKAFCRMATRKLETQKYAALRIQFFLQMAVYRRRFVQQKRAAITLQHYFRTWQTRKQFLLYRKAAVVLQNHYRAFLSAKHQRQVYLQIRSSVIIIQARSKGFIQKRKFQEIKNSTIKIQAMWRRYRAKKYLCKVKAACKIQAWYRCWRAHKEYLAILKAVKIIQGCFYTKLERTRFLNVRASAIIIQRKWRAILSAKIAHEHFLMIKRHRAACLIQAHYRGYKGRQVFLRQKSAALIIQKYIRAREAGKRERIKYIEFKKSTVILQALVRGWLVRKRILEQRAKIRLLHFTAAAYYHLNALRIQRAYKLYLAMKHANKQVNSVICIQRWFRARLQEKRFIQKYHSVKKIEHEGQECLSQRNRAASVIQKAVRHFLLRKKQEKFTSGIIKIQALWRGYSWRKKNDCTKIKAIRLSLQVVNREIREENKLYKRTALALHYLLTYKHLSAILEALKHLEVVTRLSPLCCENMAHSGAISKIFVLIRSCNRSVPCMEVIRYAVQVLLNVSKYEKTTSAVYDVENCIDILLELLQIYREKPGNKVADKGGSIFTKTCCLLAILLKTTNRASDVRSRSKVVDRIYSLYKLTAHKHKMNTERILYKQKKNSSISIPFIPETPVRTRIVSRLKPDWVLRRDNMEEITNPLQAIQMVMDTLGIPY</sequence>
<protein>
    <recommendedName>
        <fullName>Abnormal spindle-like microcephaly-associated protein homolog</fullName>
    </recommendedName>
</protein>
<dbReference type="EMBL" id="AY488938">
    <property type="protein sequence ID" value="AAR84352.1"/>
    <property type="molecule type" value="Genomic_DNA"/>
</dbReference>
<dbReference type="EMBL" id="AY488911">
    <property type="protein sequence ID" value="AAR84352.1"/>
    <property type="status" value="JOINED"/>
    <property type="molecule type" value="Genomic_DNA"/>
</dbReference>
<dbReference type="EMBL" id="AY488912">
    <property type="protein sequence ID" value="AAR84352.1"/>
    <property type="status" value="JOINED"/>
    <property type="molecule type" value="Genomic_DNA"/>
</dbReference>
<dbReference type="EMBL" id="AY488913">
    <property type="protein sequence ID" value="AAR84352.1"/>
    <property type="status" value="JOINED"/>
    <property type="molecule type" value="Genomic_DNA"/>
</dbReference>
<dbReference type="EMBL" id="AY488914">
    <property type="protein sequence ID" value="AAR84352.1"/>
    <property type="status" value="JOINED"/>
    <property type="molecule type" value="Genomic_DNA"/>
</dbReference>
<dbReference type="EMBL" id="AY488915">
    <property type="protein sequence ID" value="AAR84352.1"/>
    <property type="status" value="JOINED"/>
    <property type="molecule type" value="Genomic_DNA"/>
</dbReference>
<dbReference type="EMBL" id="AY488916">
    <property type="protein sequence ID" value="AAR84352.1"/>
    <property type="status" value="JOINED"/>
    <property type="molecule type" value="Genomic_DNA"/>
</dbReference>
<dbReference type="EMBL" id="AY488917">
    <property type="protein sequence ID" value="AAR84352.1"/>
    <property type="status" value="JOINED"/>
    <property type="molecule type" value="Genomic_DNA"/>
</dbReference>
<dbReference type="EMBL" id="AY488918">
    <property type="protein sequence ID" value="AAR84352.1"/>
    <property type="status" value="JOINED"/>
    <property type="molecule type" value="Genomic_DNA"/>
</dbReference>
<dbReference type="EMBL" id="AY488919">
    <property type="protein sequence ID" value="AAR84352.1"/>
    <property type="status" value="JOINED"/>
    <property type="molecule type" value="Genomic_DNA"/>
</dbReference>
<dbReference type="EMBL" id="AY488920">
    <property type="protein sequence ID" value="AAR84352.1"/>
    <property type="status" value="JOINED"/>
    <property type="molecule type" value="Genomic_DNA"/>
</dbReference>
<dbReference type="EMBL" id="AY488921">
    <property type="protein sequence ID" value="AAR84352.1"/>
    <property type="status" value="JOINED"/>
    <property type="molecule type" value="Genomic_DNA"/>
</dbReference>
<dbReference type="EMBL" id="AY488922">
    <property type="protein sequence ID" value="AAR84352.1"/>
    <property type="status" value="JOINED"/>
    <property type="molecule type" value="Genomic_DNA"/>
</dbReference>
<dbReference type="EMBL" id="AY488923">
    <property type="protein sequence ID" value="AAR84352.1"/>
    <property type="status" value="JOINED"/>
    <property type="molecule type" value="Genomic_DNA"/>
</dbReference>
<dbReference type="EMBL" id="AY488924">
    <property type="protein sequence ID" value="AAR84352.1"/>
    <property type="status" value="JOINED"/>
    <property type="molecule type" value="Genomic_DNA"/>
</dbReference>
<dbReference type="EMBL" id="AY488925">
    <property type="protein sequence ID" value="AAR84352.1"/>
    <property type="status" value="JOINED"/>
    <property type="molecule type" value="Genomic_DNA"/>
</dbReference>
<dbReference type="EMBL" id="AY488926">
    <property type="protein sequence ID" value="AAR84352.1"/>
    <property type="status" value="JOINED"/>
    <property type="molecule type" value="Genomic_DNA"/>
</dbReference>
<dbReference type="EMBL" id="AY488927">
    <property type="protein sequence ID" value="AAR84352.1"/>
    <property type="status" value="JOINED"/>
    <property type="molecule type" value="Genomic_DNA"/>
</dbReference>
<dbReference type="EMBL" id="AY488928">
    <property type="protein sequence ID" value="AAR84352.1"/>
    <property type="status" value="JOINED"/>
    <property type="molecule type" value="Genomic_DNA"/>
</dbReference>
<dbReference type="EMBL" id="AY488929">
    <property type="protein sequence ID" value="AAR84352.1"/>
    <property type="status" value="JOINED"/>
    <property type="molecule type" value="Genomic_DNA"/>
</dbReference>
<dbReference type="EMBL" id="AY488930">
    <property type="protein sequence ID" value="AAR84352.1"/>
    <property type="status" value="JOINED"/>
    <property type="molecule type" value="Genomic_DNA"/>
</dbReference>
<dbReference type="EMBL" id="AY488931">
    <property type="protein sequence ID" value="AAR84352.1"/>
    <property type="status" value="JOINED"/>
    <property type="molecule type" value="Genomic_DNA"/>
</dbReference>
<dbReference type="EMBL" id="AY488932">
    <property type="protein sequence ID" value="AAR84352.1"/>
    <property type="status" value="JOINED"/>
    <property type="molecule type" value="Genomic_DNA"/>
</dbReference>
<dbReference type="EMBL" id="AY488933">
    <property type="protein sequence ID" value="AAR84352.1"/>
    <property type="status" value="JOINED"/>
    <property type="molecule type" value="Genomic_DNA"/>
</dbReference>
<dbReference type="EMBL" id="AY488934">
    <property type="protein sequence ID" value="AAR84352.1"/>
    <property type="status" value="JOINED"/>
    <property type="molecule type" value="Genomic_DNA"/>
</dbReference>
<dbReference type="EMBL" id="AY488935">
    <property type="protein sequence ID" value="AAR84352.1"/>
    <property type="status" value="JOINED"/>
    <property type="molecule type" value="Genomic_DNA"/>
</dbReference>
<dbReference type="EMBL" id="AY488936">
    <property type="protein sequence ID" value="AAR84352.1"/>
    <property type="status" value="JOINED"/>
    <property type="molecule type" value="Genomic_DNA"/>
</dbReference>
<dbReference type="EMBL" id="AY488937">
    <property type="protein sequence ID" value="AAR84352.1"/>
    <property type="status" value="JOINED"/>
    <property type="molecule type" value="Genomic_DNA"/>
</dbReference>
<dbReference type="EMBL" id="AY497014">
    <property type="protein sequence ID" value="AAS48530.1"/>
    <property type="molecule type" value="Genomic_DNA"/>
</dbReference>
<dbReference type="EMBL" id="AY508451">
    <property type="protein sequence ID" value="AAS45486.1"/>
    <property type="molecule type" value="mRNA"/>
</dbReference>
<dbReference type="RefSeq" id="NP_001266535.1">
    <property type="nucleotide sequence ID" value="NM_001279606.1"/>
</dbReference>
<dbReference type="RefSeq" id="XP_018878054.3">
    <property type="nucleotide sequence ID" value="XM_019022509.4"/>
</dbReference>
<dbReference type="SMR" id="P62289"/>
<dbReference type="FunCoup" id="P62289">
    <property type="interactions" value="1078"/>
</dbReference>
<dbReference type="STRING" id="9593.ENSGGOP00000024559"/>
<dbReference type="GeneID" id="101132110"/>
<dbReference type="KEGG" id="ggo:101132110"/>
<dbReference type="CTD" id="259266"/>
<dbReference type="eggNOG" id="KOG0165">
    <property type="taxonomic scope" value="Eukaryota"/>
</dbReference>
<dbReference type="InParanoid" id="P62289"/>
<dbReference type="Proteomes" id="UP000001519">
    <property type="component" value="Unplaced"/>
</dbReference>
<dbReference type="GO" id="GO:0005737">
    <property type="term" value="C:cytoplasm"/>
    <property type="evidence" value="ECO:0007669"/>
    <property type="project" value="UniProtKB-SubCell"/>
</dbReference>
<dbReference type="GO" id="GO:0005634">
    <property type="term" value="C:nucleus"/>
    <property type="evidence" value="ECO:0007669"/>
    <property type="project" value="UniProtKB-SubCell"/>
</dbReference>
<dbReference type="GO" id="GO:0000922">
    <property type="term" value="C:spindle pole"/>
    <property type="evidence" value="ECO:0000318"/>
    <property type="project" value="GO_Central"/>
</dbReference>
<dbReference type="GO" id="GO:0005516">
    <property type="term" value="F:calmodulin binding"/>
    <property type="evidence" value="ECO:0000318"/>
    <property type="project" value="GO_Central"/>
</dbReference>
<dbReference type="GO" id="GO:0051301">
    <property type="term" value="P:cell division"/>
    <property type="evidence" value="ECO:0007669"/>
    <property type="project" value="UniProtKB-KW"/>
</dbReference>
<dbReference type="GO" id="GO:0051295">
    <property type="term" value="P:establishment of meiotic spindle localization"/>
    <property type="evidence" value="ECO:0000318"/>
    <property type="project" value="GO_Central"/>
</dbReference>
<dbReference type="GO" id="GO:0000278">
    <property type="term" value="P:mitotic cell cycle"/>
    <property type="evidence" value="ECO:0000318"/>
    <property type="project" value="GO_Central"/>
</dbReference>
<dbReference type="GO" id="GO:0007051">
    <property type="term" value="P:spindle organization"/>
    <property type="evidence" value="ECO:0000318"/>
    <property type="project" value="GO_Central"/>
</dbReference>
<dbReference type="CDD" id="cd21223">
    <property type="entry name" value="CH_ASPM_rpt1"/>
    <property type="match status" value="1"/>
</dbReference>
<dbReference type="CDD" id="cd21224">
    <property type="entry name" value="CH_ASPM_rpt2"/>
    <property type="match status" value="1"/>
</dbReference>
<dbReference type="FunFam" id="1.20.5.190:FF:000052">
    <property type="entry name" value="Abnormal spindle-like microcephaly-associated protein"/>
    <property type="match status" value="1"/>
</dbReference>
<dbReference type="FunFam" id="1.10.418.10:FF:000051">
    <property type="entry name" value="Abnormal spindle-like microcephaly-associated protein homolog"/>
    <property type="match status" value="1"/>
</dbReference>
<dbReference type="FunFam" id="1.20.5.190:FF:000008">
    <property type="entry name" value="Abnormal spindle-like microcephaly-associated protein homolog"/>
    <property type="match status" value="5"/>
</dbReference>
<dbReference type="FunFam" id="1.20.5.190:FF:000009">
    <property type="entry name" value="Abnormal spindle-like microcephaly-associated protein homolog"/>
    <property type="match status" value="4"/>
</dbReference>
<dbReference type="FunFam" id="1.20.5.190:FF:000010">
    <property type="entry name" value="Abnormal spindle-like microcephaly-associated protein homolog"/>
    <property type="match status" value="2"/>
</dbReference>
<dbReference type="FunFam" id="1.20.5.190:FF:000016">
    <property type="entry name" value="Abnormal spindle-like microcephaly-associated protein homolog"/>
    <property type="match status" value="1"/>
</dbReference>
<dbReference type="FunFam" id="1.20.5.190:FF:000023">
    <property type="entry name" value="Abnormal spindle-like microcephaly-associated protein homolog"/>
    <property type="match status" value="1"/>
</dbReference>
<dbReference type="FunFam" id="1.20.5.190:FF:000028">
    <property type="entry name" value="Abnormal spindle-like microcephaly-associated protein homolog"/>
    <property type="match status" value="1"/>
</dbReference>
<dbReference type="FunFam" id="1.20.5.190:FF:000029">
    <property type="entry name" value="Abnormal spindle-like microcephaly-associated protein homolog"/>
    <property type="match status" value="1"/>
</dbReference>
<dbReference type="FunFam" id="1.20.5.190:FF:000030">
    <property type="entry name" value="Abnormal spindle-like microcephaly-associated protein homolog"/>
    <property type="match status" value="1"/>
</dbReference>
<dbReference type="FunFam" id="1.20.5.190:FF:000031">
    <property type="entry name" value="Abnormal spindle-like microcephaly-associated protein homolog"/>
    <property type="match status" value="1"/>
</dbReference>
<dbReference type="FunFam" id="1.20.5.190:FF:000032">
    <property type="entry name" value="Abnormal spindle-like microcephaly-associated protein homolog"/>
    <property type="match status" value="1"/>
</dbReference>
<dbReference type="FunFam" id="1.20.5.190:FF:000034">
    <property type="entry name" value="Abnormal spindle-like microcephaly-associated protein homolog"/>
    <property type="match status" value="1"/>
</dbReference>
<dbReference type="FunFam" id="1.20.5.190:FF:000035">
    <property type="entry name" value="Abnormal spindle-like microcephaly-associated protein homolog"/>
    <property type="match status" value="1"/>
</dbReference>
<dbReference type="FunFam" id="1.20.5.190:FF:000046">
    <property type="entry name" value="Abnormal spindle-like microcephaly-associated protein homolog"/>
    <property type="match status" value="1"/>
</dbReference>
<dbReference type="FunFam" id="1.20.5.190:FF:000053">
    <property type="entry name" value="Abnormal spindle-like microcephaly-associated protein homolog"/>
    <property type="match status" value="1"/>
</dbReference>
<dbReference type="FunFam" id="1.20.5.190:FF:000059">
    <property type="entry name" value="Abnormal spindle-like microcephaly-associated protein homolog"/>
    <property type="match status" value="1"/>
</dbReference>
<dbReference type="FunFam" id="2.60.40.10:FF:001429">
    <property type="entry name" value="Abnormal spindle-like microcephaly-associated protein homolog"/>
    <property type="match status" value="1"/>
</dbReference>
<dbReference type="Gene3D" id="1.20.5.190">
    <property type="match status" value="32"/>
</dbReference>
<dbReference type="Gene3D" id="1.10.418.10">
    <property type="entry name" value="Calponin-like domain"/>
    <property type="match status" value="2"/>
</dbReference>
<dbReference type="Gene3D" id="2.60.40.10">
    <property type="entry name" value="Immunoglobulins"/>
    <property type="match status" value="1"/>
</dbReference>
<dbReference type="Gene3D" id="1.25.10.10">
    <property type="entry name" value="Leucine-rich Repeat Variant"/>
    <property type="match status" value="1"/>
</dbReference>
<dbReference type="InterPro" id="IPR011989">
    <property type="entry name" value="ARM-like"/>
</dbReference>
<dbReference type="InterPro" id="IPR016024">
    <property type="entry name" value="ARM-type_fold"/>
</dbReference>
<dbReference type="InterPro" id="IPR031549">
    <property type="entry name" value="ASH"/>
</dbReference>
<dbReference type="InterPro" id="IPR051185">
    <property type="entry name" value="ASPM"/>
</dbReference>
<dbReference type="InterPro" id="IPR001715">
    <property type="entry name" value="CH_dom"/>
</dbReference>
<dbReference type="InterPro" id="IPR036872">
    <property type="entry name" value="CH_dom_sf"/>
</dbReference>
<dbReference type="InterPro" id="IPR013783">
    <property type="entry name" value="Ig-like_fold"/>
</dbReference>
<dbReference type="InterPro" id="IPR000048">
    <property type="entry name" value="IQ_motif_EF-hand-BS"/>
</dbReference>
<dbReference type="InterPro" id="IPR027417">
    <property type="entry name" value="P-loop_NTPase"/>
</dbReference>
<dbReference type="PANTHER" id="PTHR22706">
    <property type="entry name" value="ASSEMBLY FACTOR FOR SPINDLE MICROTUBULES"/>
    <property type="match status" value="1"/>
</dbReference>
<dbReference type="PANTHER" id="PTHR22706:SF1">
    <property type="entry name" value="ASSEMBLY FACTOR FOR SPINDLE MICROTUBULES"/>
    <property type="match status" value="1"/>
</dbReference>
<dbReference type="Pfam" id="PF15780">
    <property type="entry name" value="ASH"/>
    <property type="match status" value="1"/>
</dbReference>
<dbReference type="Pfam" id="PF00307">
    <property type="entry name" value="CH"/>
    <property type="match status" value="1"/>
</dbReference>
<dbReference type="Pfam" id="PF00612">
    <property type="entry name" value="IQ"/>
    <property type="match status" value="38"/>
</dbReference>
<dbReference type="SMART" id="SM00033">
    <property type="entry name" value="CH"/>
    <property type="match status" value="2"/>
</dbReference>
<dbReference type="SMART" id="SM00015">
    <property type="entry name" value="IQ"/>
    <property type="match status" value="62"/>
</dbReference>
<dbReference type="SUPFAM" id="SSF48371">
    <property type="entry name" value="ARM repeat"/>
    <property type="match status" value="1"/>
</dbReference>
<dbReference type="SUPFAM" id="SSF47576">
    <property type="entry name" value="Calponin-homology domain, CH-domain"/>
    <property type="match status" value="1"/>
</dbReference>
<dbReference type="SUPFAM" id="SSF52540">
    <property type="entry name" value="P-loop containing nucleoside triphosphate hydrolases"/>
    <property type="match status" value="19"/>
</dbReference>
<dbReference type="PROSITE" id="PS50021">
    <property type="entry name" value="CH"/>
    <property type="match status" value="2"/>
</dbReference>
<dbReference type="PROSITE" id="PS50096">
    <property type="entry name" value="IQ"/>
    <property type="match status" value="40"/>
</dbReference>
<organism>
    <name type="scientific">Gorilla gorilla gorilla</name>
    <name type="common">Western lowland gorilla</name>
    <dbReference type="NCBI Taxonomy" id="9595"/>
    <lineage>
        <taxon>Eukaryota</taxon>
        <taxon>Metazoa</taxon>
        <taxon>Chordata</taxon>
        <taxon>Craniata</taxon>
        <taxon>Vertebrata</taxon>
        <taxon>Euteleostomi</taxon>
        <taxon>Mammalia</taxon>
        <taxon>Eutheria</taxon>
        <taxon>Euarchontoglires</taxon>
        <taxon>Primates</taxon>
        <taxon>Haplorrhini</taxon>
        <taxon>Catarrhini</taxon>
        <taxon>Hominidae</taxon>
        <taxon>Gorilla</taxon>
    </lineage>
</organism>
<reference key="1">
    <citation type="journal article" date="2004" name="Hum. Mol. Genet.">
        <title>Adaptive evolution of ASPM, a major determinant of cerebral cortical size in humans.</title>
        <authorList>
            <person name="Evans P.D."/>
            <person name="Anderson J.R."/>
            <person name="Vallender E.J."/>
            <person name="Gilbert S.L."/>
            <person name="Malcom C.M."/>
            <person name="Dorus S."/>
            <person name="Lahn B.T."/>
        </authorList>
    </citation>
    <scope>NUCLEOTIDE SEQUENCE [GENOMIC DNA]</scope>
    <scope>VARIANTS ARG-1931; ILE-1974; MET-2765 AND ILE-3166</scope>
</reference>
<reference key="2">
    <citation type="journal article" date="2004" name="PLoS Biol.">
        <title>Accelerated evolution of the ASPM gene controlling brain size begins prior to human brain expansion.</title>
        <authorList>
            <person name="Kouprina N."/>
            <person name="Pavlicek A."/>
            <person name="Mochida G.H."/>
            <person name="Solomon G."/>
            <person name="Gersch W."/>
            <person name="Yoon Y.-H."/>
            <person name="Collura R."/>
            <person name="Ruvolo M."/>
            <person name="Barrett J.C."/>
            <person name="Woods C.G."/>
            <person name="Walsh C.A."/>
            <person name="Jurka J."/>
            <person name="Larionov V."/>
        </authorList>
    </citation>
    <scope>NUCLEOTIDE SEQUENCE [GENOMIC DNA / MRNA]</scope>
    <scope>VARIANTS TYR-464; HIS-1712; ARG-1931; ILE-1974; MET-2157; GLU-2758; MET-2765; SER-2989 AND ILE-3166</scope>
</reference>
<keyword id="KW-0112">Calmodulin-binding</keyword>
<keyword id="KW-0131">Cell cycle</keyword>
<keyword id="KW-0132">Cell division</keyword>
<keyword id="KW-0175">Coiled coil</keyword>
<keyword id="KW-0963">Cytoplasm</keyword>
<keyword id="KW-0206">Cytoskeleton</keyword>
<keyword id="KW-0498">Mitosis</keyword>
<keyword id="KW-0539">Nucleus</keyword>
<keyword id="KW-0597">Phosphoprotein</keyword>
<keyword id="KW-1185">Reference proteome</keyword>
<keyword id="KW-0677">Repeat</keyword>
<feature type="chain" id="PRO_0000191331" description="Abnormal spindle-like microcephaly-associated protein homolog">
    <location>
        <begin position="1"/>
        <end position="3476"/>
    </location>
</feature>
<feature type="domain" description="Calponin-homology (CH) 1" evidence="4">
    <location>
        <begin position="919"/>
        <end position="1055"/>
    </location>
</feature>
<feature type="domain" description="Calponin-homology (CH) 2" evidence="4">
    <location>
        <begin position="1109"/>
        <end position="1260"/>
    </location>
</feature>
<feature type="domain" description="IQ 1" evidence="5">
    <location>
        <begin position="1346"/>
        <end position="1377"/>
    </location>
</feature>
<feature type="domain" description="IQ 2" evidence="5">
    <location>
        <begin position="1392"/>
        <end position="1421"/>
    </location>
</feature>
<feature type="domain" description="IQ 3" evidence="5">
    <location>
        <begin position="1581"/>
        <end position="1612"/>
    </location>
</feature>
<feature type="domain" description="IQ 4" evidence="5">
    <location>
        <begin position="1604"/>
        <end position="1633"/>
    </location>
</feature>
<feature type="domain" description="IQ 5" evidence="5">
    <location>
        <begin position="1631"/>
        <end position="1660"/>
    </location>
</feature>
<feature type="domain" description="IQ 6" evidence="5">
    <location>
        <begin position="1654"/>
        <end position="1683"/>
    </location>
</feature>
<feature type="domain" description="IQ 7" evidence="5">
    <location>
        <begin position="1727"/>
        <end position="1756"/>
    </location>
</feature>
<feature type="domain" description="IQ 8" evidence="5">
    <location>
        <begin position="1750"/>
        <end position="1781"/>
    </location>
</feature>
<feature type="domain" description="IQ 9" evidence="5">
    <location>
        <begin position="1800"/>
        <end position="1829"/>
    </location>
</feature>
<feature type="domain" description="IQ 10" evidence="5">
    <location>
        <begin position="1823"/>
        <end position="1852"/>
    </location>
</feature>
<feature type="domain" description="IQ 11" evidence="5">
    <location>
        <begin position="1873"/>
        <end position="1902"/>
    </location>
</feature>
<feature type="domain" description="IQ 12" evidence="5">
    <location>
        <begin position="1896"/>
        <end position="1927"/>
    </location>
</feature>
<feature type="domain" description="IQ 13" evidence="5">
    <location>
        <begin position="1946"/>
        <end position="1977"/>
    </location>
</feature>
<feature type="domain" description="IQ 14" evidence="5">
    <location>
        <begin position="1969"/>
        <end position="2000"/>
    </location>
</feature>
<feature type="domain" description="IQ 15" evidence="5">
    <location>
        <begin position="2019"/>
        <end position="2048"/>
    </location>
</feature>
<feature type="domain" description="IQ 16" evidence="5">
    <location>
        <begin position="2042"/>
        <end position="2073"/>
    </location>
</feature>
<feature type="domain" description="IQ 17" evidence="5">
    <location>
        <begin position="2092"/>
        <end position="2123"/>
    </location>
</feature>
<feature type="domain" description="IQ 18" evidence="5">
    <location>
        <begin position="2115"/>
        <end position="2146"/>
    </location>
</feature>
<feature type="domain" description="IQ 19" evidence="5">
    <location>
        <begin position="2165"/>
        <end position="2196"/>
    </location>
</feature>
<feature type="domain" description="IQ 20" evidence="5">
    <location>
        <begin position="2238"/>
        <end position="2269"/>
    </location>
</feature>
<feature type="domain" description="IQ 21" evidence="5">
    <location>
        <begin position="2261"/>
        <end position="2292"/>
    </location>
</feature>
<feature type="domain" description="IQ 22" evidence="5">
    <location>
        <begin position="2310"/>
        <end position="2341"/>
    </location>
</feature>
<feature type="domain" description="IQ 23" evidence="5">
    <location>
        <begin position="2333"/>
        <end position="2364"/>
    </location>
</feature>
<feature type="domain" description="IQ 24" evidence="5">
    <location>
        <begin position="2383"/>
        <end position="2414"/>
    </location>
</feature>
<feature type="domain" description="IQ 25" evidence="5">
    <location>
        <begin position="2406"/>
        <end position="2437"/>
    </location>
</feature>
<feature type="domain" description="IQ 26" evidence="5">
    <location>
        <begin position="2456"/>
        <end position="2487"/>
    </location>
</feature>
<feature type="domain" description="IQ 27" evidence="5">
    <location>
        <begin position="2479"/>
        <end position="2510"/>
    </location>
</feature>
<feature type="domain" description="IQ 28" evidence="5">
    <location>
        <begin position="2529"/>
        <end position="2560"/>
    </location>
</feature>
<feature type="domain" description="IQ 29" evidence="5">
    <location>
        <begin position="2623"/>
        <end position="2652"/>
    </location>
</feature>
<feature type="domain" description="IQ 30" evidence="5">
    <location>
        <begin position="2664"/>
        <end position="2695"/>
    </location>
</feature>
<feature type="domain" description="IQ 31" evidence="5">
    <location>
        <begin position="2687"/>
        <end position="2718"/>
    </location>
</feature>
<feature type="domain" description="IQ 32" evidence="5">
    <location>
        <begin position="2737"/>
        <end position="2766"/>
    </location>
</feature>
<feature type="domain" description="IQ 33" evidence="5">
    <location>
        <begin position="2858"/>
        <end position="2889"/>
    </location>
</feature>
<feature type="domain" description="IQ 34" evidence="5">
    <location>
        <begin position="2908"/>
        <end position="2937"/>
    </location>
</feature>
<feature type="domain" description="IQ 35" evidence="5">
    <location>
        <begin position="2931"/>
        <end position="2962"/>
    </location>
</feature>
<feature type="domain" description="IQ 36" evidence="5">
    <location>
        <begin position="2953"/>
        <end position="2984"/>
    </location>
</feature>
<feature type="domain" description="IQ 37" evidence="5">
    <location>
        <begin position="3028"/>
        <end position="3059"/>
    </location>
</feature>
<feature type="domain" description="IQ 38" evidence="5">
    <location>
        <begin position="3078"/>
        <end position="3109"/>
    </location>
</feature>
<feature type="domain" description="IQ 39" evidence="5">
    <location>
        <begin position="3180"/>
        <end position="3209"/>
    </location>
</feature>
<feature type="domain" description="IQ 40" evidence="5">
    <location>
        <begin position="3203"/>
        <end position="3234"/>
    </location>
</feature>
<feature type="region of interest" description="Disordered" evidence="6">
    <location>
        <begin position="1"/>
        <end position="30"/>
    </location>
</feature>
<feature type="region of interest" description="Disordered" evidence="6">
    <location>
        <begin position="416"/>
        <end position="443"/>
    </location>
</feature>
<feature type="region of interest" description="Disordered" evidence="6">
    <location>
        <begin position="562"/>
        <end position="581"/>
    </location>
</feature>
<feature type="coiled-coil region" evidence="3">
    <location>
        <begin position="1056"/>
        <end position="1077"/>
    </location>
</feature>
<feature type="modified residue" description="Phosphoserine" evidence="2">
    <location>
        <position position="280"/>
    </location>
</feature>
<feature type="modified residue" description="Phosphoserine" evidence="2">
    <location>
        <position position="283"/>
    </location>
</feature>
<feature type="modified residue" description="Phosphoserine" evidence="2">
    <location>
        <position position="367"/>
    </location>
</feature>
<feature type="modified residue" description="Phosphoserine" evidence="2">
    <location>
        <position position="392"/>
    </location>
</feature>
<feature type="modified residue" description="Phosphoserine" evidence="2">
    <location>
        <position position="425"/>
    </location>
</feature>
<feature type="modified residue" description="Phosphoserine" evidence="2">
    <location>
        <position position="604"/>
    </location>
</feature>
<feature type="modified residue" description="Phosphoserine" evidence="2">
    <location>
        <position position="1102"/>
    </location>
</feature>
<feature type="sequence variant" id="VAR_019087" evidence="8">
    <original>F</original>
    <variation>Y</variation>
    <location>
        <position position="464"/>
    </location>
</feature>
<feature type="sequence variant" id="VAR_019088" evidence="8">
    <original>R</original>
    <variation>H</variation>
    <location>
        <position position="1712"/>
    </location>
</feature>
<feature type="sequence variant" id="VAR_019089" evidence="7 8">
    <original>K</original>
    <variation>R</variation>
    <location>
        <position position="1931"/>
    </location>
</feature>
<feature type="sequence variant" id="VAR_019090" evidence="7 8">
    <original>V</original>
    <variation>I</variation>
    <location>
        <position position="1974"/>
    </location>
</feature>
<feature type="sequence variant" id="VAR_019091" evidence="8">
    <original>T</original>
    <variation>M</variation>
    <location>
        <position position="2157"/>
    </location>
</feature>
<feature type="sequence variant" id="VAR_019092" evidence="8">
    <original>K</original>
    <variation>E</variation>
    <location>
        <position position="2758"/>
    </location>
</feature>
<feature type="sequence variant" id="VAR_019093" evidence="7 8">
    <original>V</original>
    <variation>M</variation>
    <location>
        <position position="2765"/>
    </location>
</feature>
<feature type="sequence variant" id="VAR_019094" evidence="8">
    <original>T</original>
    <variation>S</variation>
    <location>
        <position position="2989"/>
    </location>
</feature>
<feature type="sequence variant" id="VAR_019095" evidence="7 8">
    <original>V</original>
    <variation>I</variation>
    <location>
        <position position="3166"/>
    </location>
</feature>
<feature type="sequence conflict" description="In Ref. 2; AAS45486." evidence="9" ref="2">
    <original>T</original>
    <variation>I</variation>
    <location>
        <position position="213"/>
    </location>
</feature>
<feature type="sequence conflict" description="In Ref. 1; AAR84352." evidence="9" ref="1">
    <original>F</original>
    <variation>V</variation>
    <location>
        <position position="451"/>
    </location>
</feature>
<feature type="sequence conflict" description="In Ref. 1; AAR84352." evidence="9" ref="1">
    <original>H</original>
    <variation>R</variation>
    <location>
        <position position="626"/>
    </location>
</feature>
<feature type="sequence conflict" description="In Ref. 2; AAS45486." evidence="9" ref="2">
    <original>R</original>
    <variation>S</variation>
    <location>
        <position position="1557"/>
    </location>
</feature>
<feature type="sequence conflict" description="In Ref. 1; AAR84352." evidence="9" ref="1">
    <original>H</original>
    <variation>Y</variation>
    <location>
        <position position="1668"/>
    </location>
</feature>
<feature type="sequence conflict" description="In Ref. 2; AAS45486." evidence="9" ref="2">
    <original>MEYIELRHAVLMLQSMWRGKT</original>
    <variation>I</variation>
    <location>
        <begin position="1941"/>
        <end position="1961"/>
    </location>
</feature>
<feature type="sequence conflict" description="In Ref. 1; AAR84352 and 2; AAS45486." evidence="9" ref="1 2">
    <original>V</original>
    <variation>M</variation>
    <location>
        <position position="2125"/>
    </location>
</feature>
<feature type="sequence conflict" description="In Ref. 2; AAS45486." evidence="9" ref="2">
    <original>R</original>
    <variation>Q</variation>
    <location>
        <position position="2331"/>
    </location>
</feature>
<feature type="sequence conflict" description="In Ref. 1; AAR84352 and 2; AAS45486." evidence="9" ref="1 2">
    <original>T</original>
    <variation>A</variation>
    <location>
        <position position="2355"/>
    </location>
</feature>
<feature type="sequence conflict" description="In Ref. 2; AAS45486." evidence="9" ref="2">
    <original>H</original>
    <variation>Y</variation>
    <location>
        <position position="2451"/>
    </location>
</feature>
<feature type="sequence conflict" description="In Ref. 1; AAR84352 and 2; AAS45486." evidence="9" ref="1 2">
    <original>I</original>
    <variation>V</variation>
    <location>
        <position position="2484"/>
    </location>
</feature>
<feature type="sequence conflict" description="In Ref. 2; AAS45486." evidence="9" ref="2">
    <original>H</original>
    <variation>L</variation>
    <location>
        <position position="2512"/>
    </location>
</feature>
<feature type="sequence conflict" description="In Ref. 1; AAR84352." evidence="9" ref="1">
    <original>K</original>
    <variation>R</variation>
    <location>
        <position position="2836"/>
    </location>
</feature>
<feature type="sequence conflict" description="In Ref. 2; AAS45486." evidence="9" ref="2">
    <original>S</original>
    <variation>P</variation>
    <location>
        <position position="3015"/>
    </location>
</feature>
<feature type="sequence conflict" description="In Ref. 2; AAS45486." evidence="9" ref="2">
    <original>D</original>
    <variation>E</variation>
    <location>
        <position position="3337"/>
    </location>
</feature>
<feature type="sequence conflict" description="In Ref. 1; AAR84352 and 2; AAS45486." evidence="9" ref="1 2">
    <original>I</original>
    <variation>L</variation>
    <location>
        <position position="3465"/>
    </location>
</feature>